<reference key="1">
    <citation type="journal article" date="2016" name="Stand. Genomic Sci.">
        <title>Complete genome sequence of the Antarctic Halorubrum lacusprofundi type strain ACAM 34.</title>
        <authorList>
            <person name="Anderson I.J."/>
            <person name="DasSarma P."/>
            <person name="Lucas S."/>
            <person name="Copeland A."/>
            <person name="Lapidus A."/>
            <person name="Del Rio T.G."/>
            <person name="Tice H."/>
            <person name="Dalin E."/>
            <person name="Bruce D.C."/>
            <person name="Goodwin L."/>
            <person name="Pitluck S."/>
            <person name="Sims D."/>
            <person name="Brettin T.S."/>
            <person name="Detter J.C."/>
            <person name="Han C.S."/>
            <person name="Larimer F."/>
            <person name="Hauser L."/>
            <person name="Land M."/>
            <person name="Ivanova N."/>
            <person name="Richardson P."/>
            <person name="Cavicchioli R."/>
            <person name="DasSarma S."/>
            <person name="Woese C.R."/>
            <person name="Kyrpides N.C."/>
        </authorList>
    </citation>
    <scope>NUCLEOTIDE SEQUENCE [LARGE SCALE GENOMIC DNA]</scope>
    <source>
        <strain>ATCC 49239 / DSM 5036 / JCM 8891 / ACAM 34</strain>
    </source>
</reference>
<dbReference type="EMBL" id="CP001365">
    <property type="protein sequence ID" value="ACM56220.1"/>
    <property type="molecule type" value="Genomic_DNA"/>
</dbReference>
<dbReference type="RefSeq" id="WP_012659853.1">
    <property type="nucleotide sequence ID" value="NC_012029.1"/>
</dbReference>
<dbReference type="SMR" id="B9LTT6"/>
<dbReference type="GeneID" id="7401754"/>
<dbReference type="KEGG" id="hla:Hlac_0618"/>
<dbReference type="eggNOG" id="arCOG04186">
    <property type="taxonomic scope" value="Archaea"/>
</dbReference>
<dbReference type="HOGENOM" id="CLU_062507_1_0_2"/>
<dbReference type="Proteomes" id="UP000000740">
    <property type="component" value="Chromosome 1"/>
</dbReference>
<dbReference type="GO" id="GO:1990904">
    <property type="term" value="C:ribonucleoprotein complex"/>
    <property type="evidence" value="ECO:0007669"/>
    <property type="project" value="UniProtKB-KW"/>
</dbReference>
<dbReference type="GO" id="GO:0005840">
    <property type="term" value="C:ribosome"/>
    <property type="evidence" value="ECO:0007669"/>
    <property type="project" value="UniProtKB-KW"/>
</dbReference>
<dbReference type="GO" id="GO:0003735">
    <property type="term" value="F:structural constituent of ribosome"/>
    <property type="evidence" value="ECO:0007669"/>
    <property type="project" value="InterPro"/>
</dbReference>
<dbReference type="GO" id="GO:0006412">
    <property type="term" value="P:translation"/>
    <property type="evidence" value="ECO:0007669"/>
    <property type="project" value="UniProtKB-UniRule"/>
</dbReference>
<dbReference type="HAMAP" id="MF_00359">
    <property type="entry name" value="Ribosomal_eS1"/>
    <property type="match status" value="1"/>
</dbReference>
<dbReference type="InterPro" id="IPR001593">
    <property type="entry name" value="Ribosomal_eS1"/>
</dbReference>
<dbReference type="InterPro" id="IPR030838">
    <property type="entry name" value="Ribosomal_eS1_arc"/>
</dbReference>
<dbReference type="NCBIfam" id="NF003142">
    <property type="entry name" value="PRK04057.1"/>
    <property type="match status" value="1"/>
</dbReference>
<dbReference type="Pfam" id="PF01015">
    <property type="entry name" value="Ribosomal_S3Ae"/>
    <property type="match status" value="1"/>
</dbReference>
<dbReference type="SMART" id="SM01397">
    <property type="entry name" value="Ribosomal_S3Ae"/>
    <property type="match status" value="1"/>
</dbReference>
<accession>B9LTT6</accession>
<sequence length="215" mass="24041">MSERSVSKSREQKRWYSVLAPEQFDRQELGETLAEEPDQVVGRTITTTLGELTGDSGANNTKLTFKITDVGSDTAYTEFIKYELTRDYLRSLVRRGASKVEASITVLTTDDYRIRVQPVALTTKKADRSQEKAIRRVMIDKVHAAAEDRTFESFVDAIVEGNLSSAIYGDAKLIYPLRRVEIQKLTLEARPSEVAAEEETAVDVDADEVAVDADE</sequence>
<name>RS3A_HALLT</name>
<proteinExistence type="inferred from homology"/>
<keyword id="KW-1185">Reference proteome</keyword>
<keyword id="KW-0687">Ribonucleoprotein</keyword>
<keyword id="KW-0689">Ribosomal protein</keyword>
<protein>
    <recommendedName>
        <fullName evidence="1">Small ribosomal subunit protein eS1</fullName>
    </recommendedName>
    <alternativeName>
        <fullName evidence="2">30S ribosomal protein S3Ae</fullName>
    </alternativeName>
    <alternativeName>
        <fullName evidence="1">Ribosomal protein S1e</fullName>
    </alternativeName>
</protein>
<organism>
    <name type="scientific">Halorubrum lacusprofundi (strain ATCC 49239 / DSM 5036 / JCM 8891 / ACAM 34)</name>
    <dbReference type="NCBI Taxonomy" id="416348"/>
    <lineage>
        <taxon>Archaea</taxon>
        <taxon>Methanobacteriati</taxon>
        <taxon>Methanobacteriota</taxon>
        <taxon>Stenosarchaea group</taxon>
        <taxon>Halobacteria</taxon>
        <taxon>Halobacteriales</taxon>
        <taxon>Haloferacaceae</taxon>
        <taxon>Halorubrum</taxon>
    </lineage>
</organism>
<evidence type="ECO:0000255" key="1">
    <source>
        <dbReference type="HAMAP-Rule" id="MF_00359"/>
    </source>
</evidence>
<evidence type="ECO:0000305" key="2"/>
<comment type="similarity">
    <text evidence="1">Belongs to the eukaryotic ribosomal protein eS1 family.</text>
</comment>
<gene>
    <name evidence="1" type="primary">rps3ae</name>
    <name type="ordered locus">Hlac_0618</name>
</gene>
<feature type="chain" id="PRO_1000133499" description="Small ribosomal subunit protein eS1">
    <location>
        <begin position="1"/>
        <end position="215"/>
    </location>
</feature>